<dbReference type="GO" id="GO:0005576">
    <property type="term" value="C:extracellular region"/>
    <property type="evidence" value="ECO:0007669"/>
    <property type="project" value="UniProtKB-SubCell"/>
</dbReference>
<dbReference type="GO" id="GO:0006952">
    <property type="term" value="P:defense response"/>
    <property type="evidence" value="ECO:0007669"/>
    <property type="project" value="UniProtKB-KW"/>
</dbReference>
<protein>
    <recommendedName>
        <fullName evidence="3">Peptide PGLa-BM3</fullName>
    </recommendedName>
</protein>
<sequence>GMASTAGSVLGKLAKAVAIGAL</sequence>
<proteinExistence type="evidence at protein level"/>
<name>PGBM3_XENBM</name>
<accession>C0HKL9</accession>
<organism evidence="3">
    <name type="scientific">Xenopus boumbaensis</name>
    <name type="common">Mawa clawed frog</name>
    <dbReference type="NCBI Taxonomy" id="288550"/>
    <lineage>
        <taxon>Eukaryota</taxon>
        <taxon>Metazoa</taxon>
        <taxon>Chordata</taxon>
        <taxon>Craniata</taxon>
        <taxon>Vertebrata</taxon>
        <taxon>Euteleostomi</taxon>
        <taxon>Amphibia</taxon>
        <taxon>Batrachia</taxon>
        <taxon>Anura</taxon>
        <taxon>Pipoidea</taxon>
        <taxon>Pipidae</taxon>
        <taxon>Xenopodinae</taxon>
        <taxon>Xenopus</taxon>
        <taxon>Xenopus</taxon>
    </lineage>
</organism>
<evidence type="ECO:0000250" key="1">
    <source>
        <dbReference type="UniProtKB" id="C0HK87"/>
    </source>
</evidence>
<evidence type="ECO:0000269" key="2">
    <source>
    </source>
</evidence>
<evidence type="ECO:0000303" key="3">
    <source>
    </source>
</evidence>
<evidence type="ECO:0000305" key="4"/>
<evidence type="ECO:0000305" key="5">
    <source>
    </source>
</evidence>
<feature type="peptide" id="PRO_0000440796" description="Peptide PGLa-BM3" evidence="2">
    <location>
        <begin position="1"/>
        <end position="22"/>
    </location>
</feature>
<feature type="modified residue" description="Leucine amide" evidence="2">
    <location>
        <position position="22"/>
    </location>
</feature>
<comment type="function">
    <text evidence="1">Antimicrobial peptide.</text>
</comment>
<comment type="subcellular location">
    <subcellularLocation>
        <location evidence="2">Secreted</location>
    </subcellularLocation>
</comment>
<comment type="tissue specificity">
    <text evidence="5">Expressed by the skin glands.</text>
</comment>
<comment type="mass spectrometry"/>
<comment type="similarity">
    <text evidence="4">Belongs to the gastrin/cholecystokinin family. Magainin subfamily.</text>
</comment>
<reference evidence="4" key="1">
    <citation type="journal article" date="2015" name="Peptides">
        <title>Host-defense and trefoil factor family peptides in skin secretions of the Mawa clawed frog Xenopus boumbaensis (Pipidae).</title>
        <authorList>
            <person name="Conlon J.M."/>
            <person name="Mechkarska M."/>
            <person name="Kolodziejek J."/>
            <person name="Leprince J."/>
            <person name="Coquet L."/>
            <person name="Jouenne T."/>
            <person name="Vaudry H."/>
            <person name="Nowotny N."/>
            <person name="King J.D."/>
        </authorList>
    </citation>
    <scope>PROTEIN SEQUENCE</scope>
    <scope>SUBCELLULAR LOCATION</scope>
    <scope>MASS SPECTROMETRY</scope>
    <scope>AMIDATION AT LEU-22</scope>
    <source>
        <tissue evidence="3">Skin secretion</tissue>
    </source>
</reference>
<keyword id="KW-0027">Amidation</keyword>
<keyword id="KW-0878">Amphibian defense peptide</keyword>
<keyword id="KW-0929">Antimicrobial</keyword>
<keyword id="KW-0903">Direct protein sequencing</keyword>
<keyword id="KW-0964">Secreted</keyword>